<dbReference type="EMBL" id="AB049065">
    <property type="protein sequence ID" value="BAB39526.1"/>
    <property type="molecule type" value="mRNA"/>
</dbReference>
<dbReference type="EMBL" id="AB050104">
    <property type="protein sequence ID" value="BAB41134.1"/>
    <property type="molecule type" value="Genomic_DNA"/>
</dbReference>
<dbReference type="EMBL" id="AK050791">
    <property type="protein sequence ID" value="BAC34412.1"/>
    <property type="molecule type" value="mRNA"/>
</dbReference>
<dbReference type="EMBL" id="AL645527">
    <property type="status" value="NOT_ANNOTATED_CDS"/>
    <property type="molecule type" value="Genomic_DNA"/>
</dbReference>
<dbReference type="EMBL" id="BC134378">
    <property type="protein sequence ID" value="AAI34379.1"/>
    <property type="molecule type" value="mRNA"/>
</dbReference>
<dbReference type="CCDS" id="CCDS24883.1"/>
<dbReference type="RefSeq" id="NP_149030.2">
    <property type="nucleotide sequence ID" value="NM_033041.5"/>
</dbReference>
<dbReference type="SMR" id="Q8BKT2"/>
<dbReference type="ELM" id="Q8BKT2"/>
<dbReference type="FunCoup" id="Q8BKT2">
    <property type="interactions" value="790"/>
</dbReference>
<dbReference type="STRING" id="10090.ENSMUSP00000024543"/>
<dbReference type="GlyGen" id="Q8BKT2">
    <property type="glycosylation" value="1 site, 1 O-linked glycan (1 site)"/>
</dbReference>
<dbReference type="iPTMnet" id="Q8BKT2"/>
<dbReference type="PhosphoSitePlus" id="Q8BKT2"/>
<dbReference type="PaxDb" id="10090-ENSMUSP00000024543"/>
<dbReference type="Antibodypedia" id="6182">
    <property type="antibodies" value="219 antibodies from 27 providers"/>
</dbReference>
<dbReference type="DNASU" id="84653"/>
<dbReference type="Ensembl" id="ENSMUST00000024543.3">
    <property type="protein sequence ID" value="ENSMUSP00000024543.3"/>
    <property type="gene ID" value="ENSMUSG00000023781.3"/>
</dbReference>
<dbReference type="GeneID" id="84653"/>
<dbReference type="KEGG" id="mmu:84653"/>
<dbReference type="UCSC" id="uc007jpi.1">
    <property type="organism name" value="mouse"/>
</dbReference>
<dbReference type="AGR" id="MGI:2135679"/>
<dbReference type="CTD" id="84667"/>
<dbReference type="MGI" id="MGI:2135679">
    <property type="gene designation" value="Hes7"/>
</dbReference>
<dbReference type="VEuPathDB" id="HostDB:ENSMUSG00000023781"/>
<dbReference type="eggNOG" id="KOG4304">
    <property type="taxonomic scope" value="Eukaryota"/>
</dbReference>
<dbReference type="GeneTree" id="ENSGT00730000111282"/>
<dbReference type="HOGENOM" id="CLU_068550_6_0_1"/>
<dbReference type="InParanoid" id="Q8BKT2"/>
<dbReference type="OMA" id="YMMGFRE"/>
<dbReference type="OrthoDB" id="6085656at2759"/>
<dbReference type="PhylomeDB" id="Q8BKT2"/>
<dbReference type="TreeFam" id="TF351373"/>
<dbReference type="BioGRID-ORCS" id="84653">
    <property type="hits" value="4 hits in 80 CRISPR screens"/>
</dbReference>
<dbReference type="PRO" id="PR:Q8BKT2"/>
<dbReference type="Proteomes" id="UP000000589">
    <property type="component" value="Chromosome 11"/>
</dbReference>
<dbReference type="RNAct" id="Q8BKT2">
    <property type="molecule type" value="protein"/>
</dbReference>
<dbReference type="Bgee" id="ENSMUSG00000023781">
    <property type="expression patterns" value="Expressed in paraxial mesoderm and 56 other cell types or tissues"/>
</dbReference>
<dbReference type="GO" id="GO:0005654">
    <property type="term" value="C:nucleoplasm"/>
    <property type="evidence" value="ECO:0000304"/>
    <property type="project" value="Reactome"/>
</dbReference>
<dbReference type="GO" id="GO:0001227">
    <property type="term" value="F:DNA-binding transcription repressor activity, RNA polymerase II-specific"/>
    <property type="evidence" value="ECO:0000305"/>
    <property type="project" value="NTNU_SB"/>
</dbReference>
<dbReference type="GO" id="GO:0046983">
    <property type="term" value="F:protein dimerization activity"/>
    <property type="evidence" value="ECO:0007669"/>
    <property type="project" value="InterPro"/>
</dbReference>
<dbReference type="GO" id="GO:0000977">
    <property type="term" value="F:RNA polymerase II transcription regulatory region sequence-specific DNA binding"/>
    <property type="evidence" value="ECO:0000314"/>
    <property type="project" value="NTNU_SB"/>
</dbReference>
<dbReference type="GO" id="GO:0045892">
    <property type="term" value="P:negative regulation of DNA-templated transcription"/>
    <property type="evidence" value="ECO:0000314"/>
    <property type="project" value="UniProtKB"/>
</dbReference>
<dbReference type="GO" id="GO:0000122">
    <property type="term" value="P:negative regulation of transcription by RNA polymerase II"/>
    <property type="evidence" value="ECO:0000314"/>
    <property type="project" value="MGI"/>
</dbReference>
<dbReference type="GO" id="GO:0007219">
    <property type="term" value="P:Notch signaling pathway"/>
    <property type="evidence" value="ECO:0000314"/>
    <property type="project" value="MGI"/>
</dbReference>
<dbReference type="GO" id="GO:0036342">
    <property type="term" value="P:post-anal tail morphogenesis"/>
    <property type="evidence" value="ECO:0000315"/>
    <property type="project" value="MGI"/>
</dbReference>
<dbReference type="GO" id="GO:0048511">
    <property type="term" value="P:rhythmic process"/>
    <property type="evidence" value="ECO:0000314"/>
    <property type="project" value="MGI"/>
</dbReference>
<dbReference type="GO" id="GO:0001501">
    <property type="term" value="P:skeletal system development"/>
    <property type="evidence" value="ECO:0000315"/>
    <property type="project" value="MGI"/>
</dbReference>
<dbReference type="GO" id="GO:0001756">
    <property type="term" value="P:somitogenesis"/>
    <property type="evidence" value="ECO:0000315"/>
    <property type="project" value="MGI"/>
</dbReference>
<dbReference type="FunFam" id="4.10.280.10:FF:000063">
    <property type="entry name" value="transcription factor HES-7 isoform X1"/>
    <property type="match status" value="1"/>
</dbReference>
<dbReference type="Gene3D" id="4.10.280.10">
    <property type="entry name" value="Helix-loop-helix DNA-binding domain"/>
    <property type="match status" value="1"/>
</dbReference>
<dbReference type="InterPro" id="IPR011598">
    <property type="entry name" value="bHLH_dom"/>
</dbReference>
<dbReference type="InterPro" id="IPR050370">
    <property type="entry name" value="HES_HEY"/>
</dbReference>
<dbReference type="InterPro" id="IPR036638">
    <property type="entry name" value="HLH_DNA-bd_sf"/>
</dbReference>
<dbReference type="InterPro" id="IPR003650">
    <property type="entry name" value="Orange_dom"/>
</dbReference>
<dbReference type="PANTHER" id="PTHR10985">
    <property type="entry name" value="BASIC HELIX-LOOP-HELIX TRANSCRIPTION FACTOR, HES-RELATED"/>
    <property type="match status" value="1"/>
</dbReference>
<dbReference type="Pfam" id="PF00010">
    <property type="entry name" value="HLH"/>
    <property type="match status" value="1"/>
</dbReference>
<dbReference type="SMART" id="SM00353">
    <property type="entry name" value="HLH"/>
    <property type="match status" value="1"/>
</dbReference>
<dbReference type="SUPFAM" id="SSF47459">
    <property type="entry name" value="HLH, helix-loop-helix DNA-binding domain"/>
    <property type="match status" value="1"/>
</dbReference>
<dbReference type="PROSITE" id="PS50888">
    <property type="entry name" value="BHLH"/>
    <property type="match status" value="1"/>
</dbReference>
<dbReference type="PROSITE" id="PS51054">
    <property type="entry name" value="ORANGE"/>
    <property type="match status" value="1"/>
</dbReference>
<accession>Q8BKT2</accession>
<accession>A3KPD3</accession>
<accession>Q99JA6</accession>
<name>HES7_MOUSE</name>
<evidence type="ECO:0000250" key="1"/>
<evidence type="ECO:0000255" key="2">
    <source>
        <dbReference type="PROSITE-ProRule" id="PRU00380"/>
    </source>
</evidence>
<evidence type="ECO:0000255" key="3">
    <source>
        <dbReference type="PROSITE-ProRule" id="PRU00981"/>
    </source>
</evidence>
<evidence type="ECO:0000256" key="4">
    <source>
        <dbReference type="SAM" id="MobiDB-lite"/>
    </source>
</evidence>
<evidence type="ECO:0000269" key="5">
    <source>
    </source>
</evidence>
<evidence type="ECO:0000269" key="6">
    <source>
    </source>
</evidence>
<evidence type="ECO:0000269" key="7">
    <source>
    </source>
</evidence>
<evidence type="ECO:0000269" key="8">
    <source>
    </source>
</evidence>
<evidence type="ECO:0000305" key="9"/>
<reference key="1">
    <citation type="journal article" date="2001" name="Genes Cells">
        <title>Hes7: a bHLH-type repressor gene regulated by Notch and expressed in the presomitic mesoderm.</title>
        <authorList>
            <person name="Bessho Y."/>
            <person name="Miyoshi G."/>
            <person name="Sakata R."/>
            <person name="Kageyama R."/>
        </authorList>
    </citation>
    <scope>NUCLEOTIDE SEQUENCE [GENOMIC DNA / MRNA]</scope>
    <scope>FUNCTION</scope>
    <scope>DEVELOPMENTAL STAGE</scope>
    <scope>INDUCTION</scope>
    <source>
        <tissue>Embryo</tissue>
    </source>
</reference>
<reference key="2">
    <citation type="journal article" date="2005" name="Science">
        <title>The transcriptional landscape of the mammalian genome.</title>
        <authorList>
            <person name="Carninci P."/>
            <person name="Kasukawa T."/>
            <person name="Katayama S."/>
            <person name="Gough J."/>
            <person name="Frith M.C."/>
            <person name="Maeda N."/>
            <person name="Oyama R."/>
            <person name="Ravasi T."/>
            <person name="Lenhard B."/>
            <person name="Wells C."/>
            <person name="Kodzius R."/>
            <person name="Shimokawa K."/>
            <person name="Bajic V.B."/>
            <person name="Brenner S.E."/>
            <person name="Batalov S."/>
            <person name="Forrest A.R."/>
            <person name="Zavolan M."/>
            <person name="Davis M.J."/>
            <person name="Wilming L.G."/>
            <person name="Aidinis V."/>
            <person name="Allen J.E."/>
            <person name="Ambesi-Impiombato A."/>
            <person name="Apweiler R."/>
            <person name="Aturaliya R.N."/>
            <person name="Bailey T.L."/>
            <person name="Bansal M."/>
            <person name="Baxter L."/>
            <person name="Beisel K.W."/>
            <person name="Bersano T."/>
            <person name="Bono H."/>
            <person name="Chalk A.M."/>
            <person name="Chiu K.P."/>
            <person name="Choudhary V."/>
            <person name="Christoffels A."/>
            <person name="Clutterbuck D.R."/>
            <person name="Crowe M.L."/>
            <person name="Dalla E."/>
            <person name="Dalrymple B.P."/>
            <person name="de Bono B."/>
            <person name="Della Gatta G."/>
            <person name="di Bernardo D."/>
            <person name="Down T."/>
            <person name="Engstrom P."/>
            <person name="Fagiolini M."/>
            <person name="Faulkner G."/>
            <person name="Fletcher C.F."/>
            <person name="Fukushima T."/>
            <person name="Furuno M."/>
            <person name="Futaki S."/>
            <person name="Gariboldi M."/>
            <person name="Georgii-Hemming P."/>
            <person name="Gingeras T.R."/>
            <person name="Gojobori T."/>
            <person name="Green R.E."/>
            <person name="Gustincich S."/>
            <person name="Harbers M."/>
            <person name="Hayashi Y."/>
            <person name="Hensch T.K."/>
            <person name="Hirokawa N."/>
            <person name="Hill D."/>
            <person name="Huminiecki L."/>
            <person name="Iacono M."/>
            <person name="Ikeo K."/>
            <person name="Iwama A."/>
            <person name="Ishikawa T."/>
            <person name="Jakt M."/>
            <person name="Kanapin A."/>
            <person name="Katoh M."/>
            <person name="Kawasawa Y."/>
            <person name="Kelso J."/>
            <person name="Kitamura H."/>
            <person name="Kitano H."/>
            <person name="Kollias G."/>
            <person name="Krishnan S.P."/>
            <person name="Kruger A."/>
            <person name="Kummerfeld S.K."/>
            <person name="Kurochkin I.V."/>
            <person name="Lareau L.F."/>
            <person name="Lazarevic D."/>
            <person name="Lipovich L."/>
            <person name="Liu J."/>
            <person name="Liuni S."/>
            <person name="McWilliam S."/>
            <person name="Madan Babu M."/>
            <person name="Madera M."/>
            <person name="Marchionni L."/>
            <person name="Matsuda H."/>
            <person name="Matsuzawa S."/>
            <person name="Miki H."/>
            <person name="Mignone F."/>
            <person name="Miyake S."/>
            <person name="Morris K."/>
            <person name="Mottagui-Tabar S."/>
            <person name="Mulder N."/>
            <person name="Nakano N."/>
            <person name="Nakauchi H."/>
            <person name="Ng P."/>
            <person name="Nilsson R."/>
            <person name="Nishiguchi S."/>
            <person name="Nishikawa S."/>
            <person name="Nori F."/>
            <person name="Ohara O."/>
            <person name="Okazaki Y."/>
            <person name="Orlando V."/>
            <person name="Pang K.C."/>
            <person name="Pavan W.J."/>
            <person name="Pavesi G."/>
            <person name="Pesole G."/>
            <person name="Petrovsky N."/>
            <person name="Piazza S."/>
            <person name="Reed J."/>
            <person name="Reid J.F."/>
            <person name="Ring B.Z."/>
            <person name="Ringwald M."/>
            <person name="Rost B."/>
            <person name="Ruan Y."/>
            <person name="Salzberg S.L."/>
            <person name="Sandelin A."/>
            <person name="Schneider C."/>
            <person name="Schoenbach C."/>
            <person name="Sekiguchi K."/>
            <person name="Semple C.A."/>
            <person name="Seno S."/>
            <person name="Sessa L."/>
            <person name="Sheng Y."/>
            <person name="Shibata Y."/>
            <person name="Shimada H."/>
            <person name="Shimada K."/>
            <person name="Silva D."/>
            <person name="Sinclair B."/>
            <person name="Sperling S."/>
            <person name="Stupka E."/>
            <person name="Sugiura K."/>
            <person name="Sultana R."/>
            <person name="Takenaka Y."/>
            <person name="Taki K."/>
            <person name="Tammoja K."/>
            <person name="Tan S.L."/>
            <person name="Tang S."/>
            <person name="Taylor M.S."/>
            <person name="Tegner J."/>
            <person name="Teichmann S.A."/>
            <person name="Ueda H.R."/>
            <person name="van Nimwegen E."/>
            <person name="Verardo R."/>
            <person name="Wei C.L."/>
            <person name="Yagi K."/>
            <person name="Yamanishi H."/>
            <person name="Zabarovsky E."/>
            <person name="Zhu S."/>
            <person name="Zimmer A."/>
            <person name="Hide W."/>
            <person name="Bult C."/>
            <person name="Grimmond S.M."/>
            <person name="Teasdale R.D."/>
            <person name="Liu E.T."/>
            <person name="Brusic V."/>
            <person name="Quackenbush J."/>
            <person name="Wahlestedt C."/>
            <person name="Mattick J.S."/>
            <person name="Hume D.A."/>
            <person name="Kai C."/>
            <person name="Sasaki D."/>
            <person name="Tomaru Y."/>
            <person name="Fukuda S."/>
            <person name="Kanamori-Katayama M."/>
            <person name="Suzuki M."/>
            <person name="Aoki J."/>
            <person name="Arakawa T."/>
            <person name="Iida J."/>
            <person name="Imamura K."/>
            <person name="Itoh M."/>
            <person name="Kato T."/>
            <person name="Kawaji H."/>
            <person name="Kawagashira N."/>
            <person name="Kawashima T."/>
            <person name="Kojima M."/>
            <person name="Kondo S."/>
            <person name="Konno H."/>
            <person name="Nakano K."/>
            <person name="Ninomiya N."/>
            <person name="Nishio T."/>
            <person name="Okada M."/>
            <person name="Plessy C."/>
            <person name="Shibata K."/>
            <person name="Shiraki T."/>
            <person name="Suzuki S."/>
            <person name="Tagami M."/>
            <person name="Waki K."/>
            <person name="Watahiki A."/>
            <person name="Okamura-Oho Y."/>
            <person name="Suzuki H."/>
            <person name="Kawai J."/>
            <person name="Hayashizaki Y."/>
        </authorList>
    </citation>
    <scope>NUCLEOTIDE SEQUENCE [LARGE SCALE MRNA]</scope>
    <source>
        <strain>C57BL/6J</strain>
        <tissue>Embryo</tissue>
    </source>
</reference>
<reference key="3">
    <citation type="journal article" date="2009" name="PLoS Biol.">
        <title>Lineage-specific biology revealed by a finished genome assembly of the mouse.</title>
        <authorList>
            <person name="Church D.M."/>
            <person name="Goodstadt L."/>
            <person name="Hillier L.W."/>
            <person name="Zody M.C."/>
            <person name="Goldstein S."/>
            <person name="She X."/>
            <person name="Bult C.J."/>
            <person name="Agarwala R."/>
            <person name="Cherry J.L."/>
            <person name="DiCuccio M."/>
            <person name="Hlavina W."/>
            <person name="Kapustin Y."/>
            <person name="Meric P."/>
            <person name="Maglott D."/>
            <person name="Birtle Z."/>
            <person name="Marques A.C."/>
            <person name="Graves T."/>
            <person name="Zhou S."/>
            <person name="Teague B."/>
            <person name="Potamousis K."/>
            <person name="Churas C."/>
            <person name="Place M."/>
            <person name="Herschleb J."/>
            <person name="Runnheim R."/>
            <person name="Forrest D."/>
            <person name="Amos-Landgraf J."/>
            <person name="Schwartz D.C."/>
            <person name="Cheng Z."/>
            <person name="Lindblad-Toh K."/>
            <person name="Eichler E.E."/>
            <person name="Ponting C.P."/>
        </authorList>
    </citation>
    <scope>NUCLEOTIDE SEQUENCE [LARGE SCALE GENOMIC DNA]</scope>
    <source>
        <strain>C57BL/6J</strain>
    </source>
</reference>
<reference key="4">
    <citation type="journal article" date="2004" name="Genome Res.">
        <title>The status, quality, and expansion of the NIH full-length cDNA project: the Mammalian Gene Collection (MGC).</title>
        <authorList>
            <consortium name="The MGC Project Team"/>
        </authorList>
    </citation>
    <scope>NUCLEOTIDE SEQUENCE [LARGE SCALE MRNA]</scope>
</reference>
<reference key="5">
    <citation type="journal article" date="2004" name="Nat. Genet.">
        <title>Instability of Hes7 protein is crucial for the somite segmentation clock.</title>
        <authorList>
            <person name="Hirata H."/>
            <person name="Bessho Y."/>
            <person name="Kokubu H."/>
            <person name="Masamizu Y."/>
            <person name="Yamada S."/>
            <person name="Lewis J."/>
            <person name="Kageyama R."/>
        </authorList>
    </citation>
    <scope>FUNCTION</scope>
    <scope>DEVELOPMENTAL STAGE</scope>
    <scope>MUTAGENESIS OF LYS-14; LYS-17; LYS-22; LYS-52; LYS-55; LYS-129 AND LYS-211</scope>
</reference>
<reference key="6">
    <citation type="journal article" date="2008" name="Hum. Mol. Genet.">
        <title>Mutation of Hairy-and-Enhancer-of-Split-7 in humans causes spondylocostal dysostosis.</title>
        <authorList>
            <person name="Sparrow D.B."/>
            <person name="Guillen-Navarro E."/>
            <person name="Fatkin D."/>
            <person name="Dunwoodie S.L."/>
        </authorList>
    </citation>
    <scope>FUNCTION</scope>
    <scope>MUTAGENESIS OF ARG-25</scope>
</reference>
<reference key="7">
    <citation type="journal article" date="2010" name="Eur. J. Hum. Genet.">
        <title>Two novel missense mutations in HAIRY-AND-ENHANCER-OF-SPLIT-7 in a family with spondylocostal dysostosis.</title>
        <authorList>
            <person name="Sparrow D.B."/>
            <person name="Sillence D."/>
            <person name="Wouters M.A."/>
            <person name="Turnpenny P.D."/>
            <person name="Dunwoodie S.L."/>
        </authorList>
    </citation>
    <scope>MUTAGENESIS OF ILE-58 AND ASP-186</scope>
</reference>
<feature type="chain" id="PRO_0000252423" description="Transcription factor HES-7">
    <location>
        <begin position="1"/>
        <end position="225"/>
    </location>
</feature>
<feature type="domain" description="bHLH" evidence="3">
    <location>
        <begin position="12"/>
        <end position="69"/>
    </location>
</feature>
<feature type="domain" description="Orange" evidence="2">
    <location>
        <begin position="92"/>
        <end position="122"/>
    </location>
</feature>
<feature type="region of interest" description="Disordered" evidence="4">
    <location>
        <begin position="124"/>
        <end position="225"/>
    </location>
</feature>
<feature type="short sequence motif" description="WRPW motif">
    <location>
        <begin position="221"/>
        <end position="224"/>
    </location>
</feature>
<feature type="compositionally biased region" description="Pro residues" evidence="4">
    <location>
        <begin position="140"/>
        <end position="149"/>
    </location>
</feature>
<feature type="compositionally biased region" description="Pro residues" evidence="4">
    <location>
        <begin position="213"/>
        <end position="225"/>
    </location>
</feature>
<feature type="mutagenesis site" description="No loss of repressor activity, somite segmentation disrupted at later stages." evidence="6">
    <original>K</original>
    <variation>R</variation>
    <location>
        <position position="14"/>
    </location>
</feature>
<feature type="mutagenesis site" description="Loss of repressor activity." evidence="6">
    <original>K</original>
    <variation>R</variation>
    <location>
        <position position="17"/>
    </location>
</feature>
<feature type="mutagenesis site" description="Loss of repressor activity." evidence="6">
    <original>K</original>
    <variation>R</variation>
    <location>
        <position position="22"/>
    </location>
</feature>
<feature type="mutagenesis site" description="Loss of repressor activity." evidence="7">
    <original>R</original>
    <variation>W</variation>
    <location>
        <position position="25"/>
    </location>
</feature>
<feature type="mutagenesis site" description="Loss of repressor activity." evidence="6">
    <original>K</original>
    <variation>R</variation>
    <location>
        <position position="52"/>
    </location>
</feature>
<feature type="mutagenesis site" description="Loss of repressor activity." evidence="6">
    <original>K</original>
    <variation>R</variation>
    <location>
        <position position="55"/>
    </location>
</feature>
<feature type="mutagenesis site" description="No loss of repressor activity." evidence="8">
    <original>I</original>
    <variation>V</variation>
    <location>
        <position position="58"/>
    </location>
</feature>
<feature type="mutagenesis site" description="No loss of repressor activity." evidence="6">
    <original>K</original>
    <variation>R</variation>
    <location>
        <position position="129"/>
    </location>
</feature>
<feature type="mutagenesis site" description="Partial loss of repressor activity." evidence="8">
    <original>D</original>
    <variation>Y</variation>
    <location>
        <position position="186"/>
    </location>
</feature>
<feature type="mutagenesis site" description="No loss of repressor activity." evidence="6">
    <original>K</original>
    <variation>R</variation>
    <location>
        <position position="211"/>
    </location>
</feature>
<feature type="sequence conflict" description="In Ref. 1; BAB39526/BAB41134 and 4; AAI34379." evidence="9" ref="1 4">
    <original>S</original>
    <variation>P</variation>
    <location>
        <position position="214"/>
    </location>
</feature>
<organism>
    <name type="scientific">Mus musculus</name>
    <name type="common">Mouse</name>
    <dbReference type="NCBI Taxonomy" id="10090"/>
    <lineage>
        <taxon>Eukaryota</taxon>
        <taxon>Metazoa</taxon>
        <taxon>Chordata</taxon>
        <taxon>Craniata</taxon>
        <taxon>Vertebrata</taxon>
        <taxon>Euteleostomi</taxon>
        <taxon>Mammalia</taxon>
        <taxon>Eutheria</taxon>
        <taxon>Euarchontoglires</taxon>
        <taxon>Glires</taxon>
        <taxon>Rodentia</taxon>
        <taxon>Myomorpha</taxon>
        <taxon>Muroidea</taxon>
        <taxon>Muridae</taxon>
        <taxon>Murinae</taxon>
        <taxon>Mus</taxon>
        <taxon>Mus</taxon>
    </lineage>
</organism>
<protein>
    <recommendedName>
        <fullName>Transcription factor HES-7</fullName>
        <shortName>mHes7</shortName>
    </recommendedName>
    <alternativeName>
        <fullName>Hairy and enhancer of split 7</fullName>
    </alternativeName>
    <alternativeName>
        <fullName>bHLH factor Hes7</fullName>
    </alternativeName>
</protein>
<gene>
    <name type="primary">Hes7</name>
</gene>
<keyword id="KW-0217">Developmental protein</keyword>
<keyword id="KW-0238">DNA-binding</keyword>
<keyword id="KW-0539">Nucleus</keyword>
<keyword id="KW-1185">Reference proteome</keyword>
<keyword id="KW-0678">Repressor</keyword>
<keyword id="KW-0804">Transcription</keyword>
<keyword id="KW-0805">Transcription regulation</keyword>
<comment type="function">
    <text evidence="5 6 7">Transcriptional repressor. Represses transcription from both N box- and E box-containing promoters. May with HES1, cooperatively regulate somite formation in the presomitic mesoderm (PSM). May function as a segmentation clock, which is essential for coordinated somite segmentation.</text>
</comment>
<comment type="subunit">
    <text evidence="1">Transcription repression requires formation of a complex with a corepressor protein of the Groucho/TLE family.</text>
</comment>
<comment type="subcellular location">
    <subcellularLocation>
        <location evidence="9">Nucleus</location>
    </subcellularLocation>
</comment>
<comment type="developmental stage">
    <text evidence="5 6">Dynamic expression in the presomitic mesoderm (PSM). At 8.5 dpc, expressed in two bilateral domains: rostral and caudal stripes. The rostral bands are located posterior to the newly formed somite, while the caudal bands extend to the most caudal tip. During 9.0 dpc-12.0 dpc stages, again specifically expressed in two domains of the PSM.</text>
</comment>
<comment type="induction">
    <text evidence="5">By Notch-signaling.</text>
</comment>
<comment type="domain">
    <text>Has a particular type of basic domain which includes a helix-interrupting proline.</text>
</comment>
<comment type="domain">
    <text evidence="1">The C-terminal WRPW motif is a transcriptional repression motif which is necessary for interaction with Groucho/TLE family members, transcriptional corepressors recruited to specific target DNA by Hairy-related proteins.</text>
</comment>
<sequence>MVTRERAENRDGPKMLKPLVEKRRRDRINRSLEELRLLLLERTRDQNLRNPKLEKAEILEFAVGYLRERSRVEPPGVPRSPGQDAEALASCYLSGFRECLLRLAAFAHDASPAARSQLFSALHGYRRPKPPRPEAVDPGLPAPRPPLDPASPILGPALHQRPPVHQGPPSPRLAWSPSHCSSRAGDSGAPAPLTGLLPPPPPPYRQDGAPKAPSLPPPAFWRPWP</sequence>
<proteinExistence type="evidence at protein level"/>